<name>MNME_HERAR</name>
<protein>
    <recommendedName>
        <fullName evidence="1">tRNA modification GTPase MnmE</fullName>
        <ecNumber evidence="1">3.6.-.-</ecNumber>
    </recommendedName>
</protein>
<organism>
    <name type="scientific">Herminiimonas arsenicoxydans</name>
    <dbReference type="NCBI Taxonomy" id="204773"/>
    <lineage>
        <taxon>Bacteria</taxon>
        <taxon>Pseudomonadati</taxon>
        <taxon>Pseudomonadota</taxon>
        <taxon>Betaproteobacteria</taxon>
        <taxon>Burkholderiales</taxon>
        <taxon>Oxalobacteraceae</taxon>
        <taxon>Herminiimonas</taxon>
    </lineage>
</organism>
<evidence type="ECO:0000255" key="1">
    <source>
        <dbReference type="HAMAP-Rule" id="MF_00379"/>
    </source>
</evidence>
<gene>
    <name evidence="1" type="primary">mnmE</name>
    <name evidence="1" type="synonym">trmE</name>
    <name type="ordered locus">HEAR3468</name>
</gene>
<proteinExistence type="inferred from homology"/>
<sequence>MTFDSSPIAAIATAPGRGGIGVVRISGKDLSSVMRAVCGADKGSSLQARHATYLDFVNSDGSVIDQGLAIYFKAPHSYTGEDVLELQGHGGPVVLQMLLTRCLEAGADIGLRMAEPGEFTHRAFLNDKLDLAQAEGVIDLIEASTEAAAKSATQSLSGAFSKTIQELVDKITNLRMLVEATLDFPEEEIDFLEKSDARGQLTNIREALQRVFSQAAQGALLRDGLNIVLAGQPNVGKSSLLNALAGSDVAIVTPIAGTTRDKVIETIQIEGIPVNVIDTAGIRDAADAGDEVERIGIERTWAAVQTADVIVHMLDASRGPTRADEQITERFPANVPVMRVWNKIDLSGHRPAIDRMPDATHIYLSATGLLGMDLLRTELLHLVGWQQTGESLYLARERHLVALKSAHSHLEMAAQHAAHDNEATDPALDLFAEELRLAQERLSSITGEFTSDDLLGVIFSRFCIGK</sequence>
<dbReference type="EC" id="3.6.-.-" evidence="1"/>
<dbReference type="EMBL" id="CU207211">
    <property type="protein sequence ID" value="CAL63569.1"/>
    <property type="molecule type" value="Genomic_DNA"/>
</dbReference>
<dbReference type="SMR" id="A4GAN2"/>
<dbReference type="STRING" id="204773.HEAR3468"/>
<dbReference type="KEGG" id="har:HEAR3468"/>
<dbReference type="eggNOG" id="COG0486">
    <property type="taxonomic scope" value="Bacteria"/>
</dbReference>
<dbReference type="HOGENOM" id="CLU_019624_4_1_4"/>
<dbReference type="OrthoDB" id="9805918at2"/>
<dbReference type="Proteomes" id="UP000006697">
    <property type="component" value="Chromosome"/>
</dbReference>
<dbReference type="GO" id="GO:0005829">
    <property type="term" value="C:cytosol"/>
    <property type="evidence" value="ECO:0007669"/>
    <property type="project" value="TreeGrafter"/>
</dbReference>
<dbReference type="GO" id="GO:0005525">
    <property type="term" value="F:GTP binding"/>
    <property type="evidence" value="ECO:0007669"/>
    <property type="project" value="UniProtKB-UniRule"/>
</dbReference>
<dbReference type="GO" id="GO:0003924">
    <property type="term" value="F:GTPase activity"/>
    <property type="evidence" value="ECO:0007669"/>
    <property type="project" value="UniProtKB-UniRule"/>
</dbReference>
<dbReference type="GO" id="GO:0046872">
    <property type="term" value="F:metal ion binding"/>
    <property type="evidence" value="ECO:0007669"/>
    <property type="project" value="UniProtKB-KW"/>
</dbReference>
<dbReference type="GO" id="GO:0030488">
    <property type="term" value="P:tRNA methylation"/>
    <property type="evidence" value="ECO:0007669"/>
    <property type="project" value="TreeGrafter"/>
</dbReference>
<dbReference type="GO" id="GO:0002098">
    <property type="term" value="P:tRNA wobble uridine modification"/>
    <property type="evidence" value="ECO:0007669"/>
    <property type="project" value="TreeGrafter"/>
</dbReference>
<dbReference type="CDD" id="cd04164">
    <property type="entry name" value="trmE"/>
    <property type="match status" value="1"/>
</dbReference>
<dbReference type="CDD" id="cd14858">
    <property type="entry name" value="TrmE_N"/>
    <property type="match status" value="1"/>
</dbReference>
<dbReference type="Gene3D" id="3.40.50.300">
    <property type="entry name" value="P-loop containing nucleotide triphosphate hydrolases"/>
    <property type="match status" value="1"/>
</dbReference>
<dbReference type="Gene3D" id="3.30.1360.120">
    <property type="entry name" value="Probable tRNA modification gtpase trme, domain 1"/>
    <property type="match status" value="1"/>
</dbReference>
<dbReference type="Gene3D" id="1.20.120.430">
    <property type="entry name" value="tRNA modification GTPase MnmE domain 2"/>
    <property type="match status" value="1"/>
</dbReference>
<dbReference type="HAMAP" id="MF_00379">
    <property type="entry name" value="GTPase_MnmE"/>
    <property type="match status" value="1"/>
</dbReference>
<dbReference type="InterPro" id="IPR031168">
    <property type="entry name" value="G_TrmE"/>
</dbReference>
<dbReference type="InterPro" id="IPR006073">
    <property type="entry name" value="GTP-bd"/>
</dbReference>
<dbReference type="InterPro" id="IPR018948">
    <property type="entry name" value="GTP-bd_TrmE_N"/>
</dbReference>
<dbReference type="InterPro" id="IPR004520">
    <property type="entry name" value="GTPase_MnmE"/>
</dbReference>
<dbReference type="InterPro" id="IPR027368">
    <property type="entry name" value="MnmE_dom2"/>
</dbReference>
<dbReference type="InterPro" id="IPR025867">
    <property type="entry name" value="MnmE_helical"/>
</dbReference>
<dbReference type="InterPro" id="IPR027417">
    <property type="entry name" value="P-loop_NTPase"/>
</dbReference>
<dbReference type="InterPro" id="IPR005225">
    <property type="entry name" value="Small_GTP-bd"/>
</dbReference>
<dbReference type="InterPro" id="IPR027266">
    <property type="entry name" value="TrmE/GcvT_dom1"/>
</dbReference>
<dbReference type="NCBIfam" id="TIGR00450">
    <property type="entry name" value="mnmE_trmE_thdF"/>
    <property type="match status" value="1"/>
</dbReference>
<dbReference type="NCBIfam" id="NF003661">
    <property type="entry name" value="PRK05291.1-3"/>
    <property type="match status" value="1"/>
</dbReference>
<dbReference type="NCBIfam" id="TIGR00231">
    <property type="entry name" value="small_GTP"/>
    <property type="match status" value="1"/>
</dbReference>
<dbReference type="PANTHER" id="PTHR42714">
    <property type="entry name" value="TRNA MODIFICATION GTPASE GTPBP3"/>
    <property type="match status" value="1"/>
</dbReference>
<dbReference type="PANTHER" id="PTHR42714:SF2">
    <property type="entry name" value="TRNA MODIFICATION GTPASE GTPBP3, MITOCHONDRIAL"/>
    <property type="match status" value="1"/>
</dbReference>
<dbReference type="Pfam" id="PF01926">
    <property type="entry name" value="MMR_HSR1"/>
    <property type="match status" value="1"/>
</dbReference>
<dbReference type="Pfam" id="PF12631">
    <property type="entry name" value="MnmE_helical"/>
    <property type="match status" value="1"/>
</dbReference>
<dbReference type="Pfam" id="PF10396">
    <property type="entry name" value="TrmE_N"/>
    <property type="match status" value="1"/>
</dbReference>
<dbReference type="PRINTS" id="PR00326">
    <property type="entry name" value="GTP1OBG"/>
</dbReference>
<dbReference type="SUPFAM" id="SSF52540">
    <property type="entry name" value="P-loop containing nucleoside triphosphate hydrolases"/>
    <property type="match status" value="1"/>
</dbReference>
<dbReference type="PROSITE" id="PS51709">
    <property type="entry name" value="G_TRME"/>
    <property type="match status" value="1"/>
</dbReference>
<accession>A4GAN2</accession>
<feature type="chain" id="PRO_0000345800" description="tRNA modification GTPase MnmE">
    <location>
        <begin position="1"/>
        <end position="466"/>
    </location>
</feature>
<feature type="domain" description="TrmE-type G">
    <location>
        <begin position="224"/>
        <end position="384"/>
    </location>
</feature>
<feature type="binding site" evidence="1">
    <location>
        <position position="24"/>
    </location>
    <ligand>
        <name>(6S)-5-formyl-5,6,7,8-tetrahydrofolate</name>
        <dbReference type="ChEBI" id="CHEBI:57457"/>
    </ligand>
</feature>
<feature type="binding site" evidence="1">
    <location>
        <position position="85"/>
    </location>
    <ligand>
        <name>(6S)-5-formyl-5,6,7,8-tetrahydrofolate</name>
        <dbReference type="ChEBI" id="CHEBI:57457"/>
    </ligand>
</feature>
<feature type="binding site" evidence="1">
    <location>
        <position position="128"/>
    </location>
    <ligand>
        <name>(6S)-5-formyl-5,6,7,8-tetrahydrofolate</name>
        <dbReference type="ChEBI" id="CHEBI:57457"/>
    </ligand>
</feature>
<feature type="binding site" evidence="1">
    <location>
        <begin position="234"/>
        <end position="239"/>
    </location>
    <ligand>
        <name>GTP</name>
        <dbReference type="ChEBI" id="CHEBI:37565"/>
    </ligand>
</feature>
<feature type="binding site" evidence="1">
    <location>
        <position position="234"/>
    </location>
    <ligand>
        <name>K(+)</name>
        <dbReference type="ChEBI" id="CHEBI:29103"/>
    </ligand>
</feature>
<feature type="binding site" evidence="1">
    <location>
        <position position="238"/>
    </location>
    <ligand>
        <name>Mg(2+)</name>
        <dbReference type="ChEBI" id="CHEBI:18420"/>
    </ligand>
</feature>
<feature type="binding site" evidence="1">
    <location>
        <begin position="253"/>
        <end position="259"/>
    </location>
    <ligand>
        <name>GTP</name>
        <dbReference type="ChEBI" id="CHEBI:37565"/>
    </ligand>
</feature>
<feature type="binding site" evidence="1">
    <location>
        <position position="253"/>
    </location>
    <ligand>
        <name>K(+)</name>
        <dbReference type="ChEBI" id="CHEBI:29103"/>
    </ligand>
</feature>
<feature type="binding site" evidence="1">
    <location>
        <position position="255"/>
    </location>
    <ligand>
        <name>K(+)</name>
        <dbReference type="ChEBI" id="CHEBI:29103"/>
    </ligand>
</feature>
<feature type="binding site" evidence="1">
    <location>
        <position position="258"/>
    </location>
    <ligand>
        <name>K(+)</name>
        <dbReference type="ChEBI" id="CHEBI:29103"/>
    </ligand>
</feature>
<feature type="binding site" evidence="1">
    <location>
        <position position="259"/>
    </location>
    <ligand>
        <name>Mg(2+)</name>
        <dbReference type="ChEBI" id="CHEBI:18420"/>
    </ligand>
</feature>
<feature type="binding site" evidence="1">
    <location>
        <begin position="278"/>
        <end position="281"/>
    </location>
    <ligand>
        <name>GTP</name>
        <dbReference type="ChEBI" id="CHEBI:37565"/>
    </ligand>
</feature>
<feature type="binding site" evidence="1">
    <location>
        <position position="466"/>
    </location>
    <ligand>
        <name>(6S)-5-formyl-5,6,7,8-tetrahydrofolate</name>
        <dbReference type="ChEBI" id="CHEBI:57457"/>
    </ligand>
</feature>
<keyword id="KW-0963">Cytoplasm</keyword>
<keyword id="KW-0342">GTP-binding</keyword>
<keyword id="KW-0378">Hydrolase</keyword>
<keyword id="KW-0460">Magnesium</keyword>
<keyword id="KW-0479">Metal-binding</keyword>
<keyword id="KW-0547">Nucleotide-binding</keyword>
<keyword id="KW-0630">Potassium</keyword>
<keyword id="KW-1185">Reference proteome</keyword>
<keyword id="KW-0819">tRNA processing</keyword>
<comment type="function">
    <text evidence="1">Exhibits a very high intrinsic GTPase hydrolysis rate. Involved in the addition of a carboxymethylaminomethyl (cmnm) group at the wobble position (U34) of certain tRNAs, forming tRNA-cmnm(5)s(2)U34.</text>
</comment>
<comment type="cofactor">
    <cofactor evidence="1">
        <name>K(+)</name>
        <dbReference type="ChEBI" id="CHEBI:29103"/>
    </cofactor>
    <text evidence="1">Binds 1 potassium ion per subunit.</text>
</comment>
<comment type="subunit">
    <text evidence="1">Homodimer. Heterotetramer of two MnmE and two MnmG subunits.</text>
</comment>
<comment type="subcellular location">
    <subcellularLocation>
        <location evidence="1">Cytoplasm</location>
    </subcellularLocation>
</comment>
<comment type="similarity">
    <text evidence="1">Belongs to the TRAFAC class TrmE-Era-EngA-EngB-Septin-like GTPase superfamily. TrmE GTPase family.</text>
</comment>
<reference key="1">
    <citation type="journal article" date="2007" name="PLoS Genet.">
        <title>A tale of two oxidation states: bacterial colonization of arsenic-rich environments.</title>
        <authorList>
            <person name="Muller D."/>
            <person name="Medigue C."/>
            <person name="Koechler S."/>
            <person name="Barbe V."/>
            <person name="Barakat M."/>
            <person name="Talla E."/>
            <person name="Bonnefoy V."/>
            <person name="Krin E."/>
            <person name="Arsene-Ploetze F."/>
            <person name="Carapito C."/>
            <person name="Chandler M."/>
            <person name="Cournoyer B."/>
            <person name="Cruveiller S."/>
            <person name="Dossat C."/>
            <person name="Duval S."/>
            <person name="Heymann M."/>
            <person name="Leize E."/>
            <person name="Lieutaud A."/>
            <person name="Lievremont D."/>
            <person name="Makita Y."/>
            <person name="Mangenot S."/>
            <person name="Nitschke W."/>
            <person name="Ortet P."/>
            <person name="Perdrial N."/>
            <person name="Schoepp B."/>
            <person name="Siguier P."/>
            <person name="Simeonova D.D."/>
            <person name="Rouy Z."/>
            <person name="Segurens B."/>
            <person name="Turlin E."/>
            <person name="Vallenet D."/>
            <person name="van Dorsselaer A."/>
            <person name="Weiss S."/>
            <person name="Weissenbach J."/>
            <person name="Lett M.-C."/>
            <person name="Danchin A."/>
            <person name="Bertin P.N."/>
        </authorList>
    </citation>
    <scope>NUCLEOTIDE SEQUENCE [LARGE SCALE GENOMIC DNA]</scope>
    <source>
        <strain>ULPAs1</strain>
    </source>
</reference>